<accession>Q4JCP0</accession>
<dbReference type="EC" id="6.3.1.5" evidence="1"/>
<dbReference type="EMBL" id="CP000077">
    <property type="protein sequence ID" value="AAY79439.1"/>
    <property type="molecule type" value="Genomic_DNA"/>
</dbReference>
<dbReference type="RefSeq" id="WP_011276940.1">
    <property type="nucleotide sequence ID" value="NC_007181.1"/>
</dbReference>
<dbReference type="SMR" id="Q4JCP0"/>
<dbReference type="STRING" id="330779.Saci_0009"/>
<dbReference type="GeneID" id="14550543"/>
<dbReference type="KEGG" id="sai:Saci_0009"/>
<dbReference type="PATRIC" id="fig|330779.12.peg.10"/>
<dbReference type="eggNOG" id="arCOG00069">
    <property type="taxonomic scope" value="Archaea"/>
</dbReference>
<dbReference type="HOGENOM" id="CLU_059327_1_1_2"/>
<dbReference type="UniPathway" id="UPA00253">
    <property type="reaction ID" value="UER00333"/>
</dbReference>
<dbReference type="Proteomes" id="UP000001018">
    <property type="component" value="Chromosome"/>
</dbReference>
<dbReference type="GO" id="GO:0005737">
    <property type="term" value="C:cytoplasm"/>
    <property type="evidence" value="ECO:0007669"/>
    <property type="project" value="InterPro"/>
</dbReference>
<dbReference type="GO" id="GO:0005524">
    <property type="term" value="F:ATP binding"/>
    <property type="evidence" value="ECO:0007669"/>
    <property type="project" value="UniProtKB-UniRule"/>
</dbReference>
<dbReference type="GO" id="GO:0004359">
    <property type="term" value="F:glutaminase activity"/>
    <property type="evidence" value="ECO:0007669"/>
    <property type="project" value="InterPro"/>
</dbReference>
<dbReference type="GO" id="GO:0046872">
    <property type="term" value="F:metal ion binding"/>
    <property type="evidence" value="ECO:0007669"/>
    <property type="project" value="UniProtKB-KW"/>
</dbReference>
<dbReference type="GO" id="GO:0003952">
    <property type="term" value="F:NAD+ synthase (glutamine-hydrolyzing) activity"/>
    <property type="evidence" value="ECO:0007669"/>
    <property type="project" value="InterPro"/>
</dbReference>
<dbReference type="GO" id="GO:0008795">
    <property type="term" value="F:NAD+ synthase activity"/>
    <property type="evidence" value="ECO:0007669"/>
    <property type="project" value="UniProtKB-UniRule"/>
</dbReference>
<dbReference type="GO" id="GO:0009435">
    <property type="term" value="P:NAD biosynthetic process"/>
    <property type="evidence" value="ECO:0007669"/>
    <property type="project" value="UniProtKB-UniRule"/>
</dbReference>
<dbReference type="CDD" id="cd00553">
    <property type="entry name" value="NAD_synthase"/>
    <property type="match status" value="1"/>
</dbReference>
<dbReference type="FunFam" id="3.40.50.620:FF:000106">
    <property type="entry name" value="Glutamine-dependent NAD(+) synthetase"/>
    <property type="match status" value="1"/>
</dbReference>
<dbReference type="Gene3D" id="3.40.50.620">
    <property type="entry name" value="HUPs"/>
    <property type="match status" value="1"/>
</dbReference>
<dbReference type="HAMAP" id="MF_00193">
    <property type="entry name" value="NadE_ammonia_dep"/>
    <property type="match status" value="1"/>
</dbReference>
<dbReference type="InterPro" id="IPR022310">
    <property type="entry name" value="NAD/GMP_synthase"/>
</dbReference>
<dbReference type="InterPro" id="IPR003694">
    <property type="entry name" value="NAD_synthase"/>
</dbReference>
<dbReference type="InterPro" id="IPR022926">
    <property type="entry name" value="NH(3)-dep_NAD(+)_synth"/>
</dbReference>
<dbReference type="InterPro" id="IPR014729">
    <property type="entry name" value="Rossmann-like_a/b/a_fold"/>
</dbReference>
<dbReference type="NCBIfam" id="TIGR00552">
    <property type="entry name" value="nadE"/>
    <property type="match status" value="1"/>
</dbReference>
<dbReference type="NCBIfam" id="NF010587">
    <property type="entry name" value="PRK13980.1"/>
    <property type="match status" value="1"/>
</dbReference>
<dbReference type="PANTHER" id="PTHR23090:SF9">
    <property type="entry name" value="GLUTAMINE-DEPENDENT NAD(+) SYNTHETASE"/>
    <property type="match status" value="1"/>
</dbReference>
<dbReference type="PANTHER" id="PTHR23090">
    <property type="entry name" value="NH 3 /GLUTAMINE-DEPENDENT NAD + SYNTHETASE"/>
    <property type="match status" value="1"/>
</dbReference>
<dbReference type="Pfam" id="PF02540">
    <property type="entry name" value="NAD_synthase"/>
    <property type="match status" value="1"/>
</dbReference>
<dbReference type="SUPFAM" id="SSF52402">
    <property type="entry name" value="Adenine nucleotide alpha hydrolases-like"/>
    <property type="match status" value="1"/>
</dbReference>
<reference key="1">
    <citation type="journal article" date="2005" name="J. Bacteriol.">
        <title>The genome of Sulfolobus acidocaldarius, a model organism of the Crenarchaeota.</title>
        <authorList>
            <person name="Chen L."/>
            <person name="Bruegger K."/>
            <person name="Skovgaard M."/>
            <person name="Redder P."/>
            <person name="She Q."/>
            <person name="Torarinsson E."/>
            <person name="Greve B."/>
            <person name="Awayez M."/>
            <person name="Zibat A."/>
            <person name="Klenk H.-P."/>
            <person name="Garrett R.A."/>
        </authorList>
    </citation>
    <scope>NUCLEOTIDE SEQUENCE [LARGE SCALE GENOMIC DNA]</scope>
    <source>
        <strain>ATCC 33909 / DSM 639 / JCM 8929 / NBRC 15157 / NCIMB 11770</strain>
    </source>
</reference>
<name>NADE_SULAC</name>
<feature type="chain" id="PRO_0000152234" description="NH(3)-dependent NAD(+) synthetase">
    <location>
        <begin position="1"/>
        <end position="279"/>
    </location>
</feature>
<feature type="binding site" evidence="1">
    <location>
        <begin position="39"/>
        <end position="46"/>
    </location>
    <ligand>
        <name>ATP</name>
        <dbReference type="ChEBI" id="CHEBI:30616"/>
    </ligand>
</feature>
<feature type="binding site" evidence="1">
    <location>
        <position position="45"/>
    </location>
    <ligand>
        <name>Mg(2+)</name>
        <dbReference type="ChEBI" id="CHEBI:18420"/>
    </ligand>
</feature>
<feature type="binding site" evidence="1">
    <location>
        <position position="122"/>
    </location>
    <ligand>
        <name>deamido-NAD(+)</name>
        <dbReference type="ChEBI" id="CHEBI:58437"/>
    </ligand>
</feature>
<feature type="binding site" evidence="1">
    <location>
        <position position="142"/>
    </location>
    <ligand>
        <name>ATP</name>
        <dbReference type="ChEBI" id="CHEBI:30616"/>
    </ligand>
</feature>
<feature type="binding site" evidence="1">
    <location>
        <position position="147"/>
    </location>
    <ligand>
        <name>Mg(2+)</name>
        <dbReference type="ChEBI" id="CHEBI:18420"/>
    </ligand>
</feature>
<feature type="binding site" evidence="1">
    <location>
        <position position="155"/>
    </location>
    <ligand>
        <name>deamido-NAD(+)</name>
        <dbReference type="ChEBI" id="CHEBI:58437"/>
    </ligand>
</feature>
<feature type="binding site" evidence="1">
    <location>
        <position position="162"/>
    </location>
    <ligand>
        <name>deamido-NAD(+)</name>
        <dbReference type="ChEBI" id="CHEBI:58437"/>
    </ligand>
</feature>
<feature type="binding site" evidence="1">
    <location>
        <position position="171"/>
    </location>
    <ligand>
        <name>ATP</name>
        <dbReference type="ChEBI" id="CHEBI:30616"/>
    </ligand>
</feature>
<feature type="binding site" evidence="1">
    <location>
        <position position="193"/>
    </location>
    <ligand>
        <name>ATP</name>
        <dbReference type="ChEBI" id="CHEBI:30616"/>
    </ligand>
</feature>
<feature type="binding site" evidence="1">
    <location>
        <begin position="253"/>
        <end position="254"/>
    </location>
    <ligand>
        <name>deamido-NAD(+)</name>
        <dbReference type="ChEBI" id="CHEBI:58437"/>
    </ligand>
</feature>
<comment type="function">
    <text evidence="1">Catalyzes the ATP-dependent amidation of deamido-NAD to form NAD. Uses ammonia as a nitrogen source.</text>
</comment>
<comment type="catalytic activity">
    <reaction evidence="1">
        <text>deamido-NAD(+) + NH4(+) + ATP = AMP + diphosphate + NAD(+) + H(+)</text>
        <dbReference type="Rhea" id="RHEA:21188"/>
        <dbReference type="ChEBI" id="CHEBI:15378"/>
        <dbReference type="ChEBI" id="CHEBI:28938"/>
        <dbReference type="ChEBI" id="CHEBI:30616"/>
        <dbReference type="ChEBI" id="CHEBI:33019"/>
        <dbReference type="ChEBI" id="CHEBI:57540"/>
        <dbReference type="ChEBI" id="CHEBI:58437"/>
        <dbReference type="ChEBI" id="CHEBI:456215"/>
        <dbReference type="EC" id="6.3.1.5"/>
    </reaction>
</comment>
<comment type="pathway">
    <text evidence="1">Cofactor biosynthesis; NAD(+) biosynthesis; NAD(+) from deamido-NAD(+) (ammonia route): step 1/1.</text>
</comment>
<comment type="subunit">
    <text evidence="1">Homodimer.</text>
</comment>
<comment type="similarity">
    <text evidence="1">Belongs to the NAD synthetase family.</text>
</comment>
<evidence type="ECO:0000255" key="1">
    <source>
        <dbReference type="HAMAP-Rule" id="MF_00193"/>
    </source>
</evidence>
<keyword id="KW-0067">ATP-binding</keyword>
<keyword id="KW-0436">Ligase</keyword>
<keyword id="KW-0460">Magnesium</keyword>
<keyword id="KW-0479">Metal-binding</keyword>
<keyword id="KW-0520">NAD</keyword>
<keyword id="KW-0547">Nucleotide-binding</keyword>
<keyword id="KW-1185">Reference proteome</keyword>
<sequence length="279" mass="31593">MPEYVREKLTLNFPLVTEYLVKRIKDYINNSGKSGGIIGLSGGIDSSVASVLLSKATENFHVLLMPSSSTPKEDLDHAFMILRLINATESKYTIINIDPIVDQFRLAVKTNDKIISGNIKARSRMILLYAFAQKFNYLVVGTGDKSELMLGYFTKYGDGGVDILPLGDLYKTQVRMLGRYLGVPEDIVKKPPSPALWEGQTAEGEIGLDYETIDSILYLRFEEMRSENEISALVNVPIDLVRRIVRMVKISQHKRLPPEIFRLSGRSINSDWRYPRQWA</sequence>
<gene>
    <name evidence="1" type="primary">nadE</name>
    <name type="ordered locus">Saci_0009</name>
</gene>
<protein>
    <recommendedName>
        <fullName evidence="1">NH(3)-dependent NAD(+) synthetase</fullName>
        <ecNumber evidence="1">6.3.1.5</ecNumber>
    </recommendedName>
</protein>
<proteinExistence type="inferred from homology"/>
<organism>
    <name type="scientific">Sulfolobus acidocaldarius (strain ATCC 33909 / DSM 639 / JCM 8929 / NBRC 15157 / NCIMB 11770)</name>
    <dbReference type="NCBI Taxonomy" id="330779"/>
    <lineage>
        <taxon>Archaea</taxon>
        <taxon>Thermoproteota</taxon>
        <taxon>Thermoprotei</taxon>
        <taxon>Sulfolobales</taxon>
        <taxon>Sulfolobaceae</taxon>
        <taxon>Sulfolobus</taxon>
    </lineage>
</organism>